<proteinExistence type="evidence at transcript level"/>
<dbReference type="EMBL" id="AB010074">
    <property type="protein sequence ID" value="BAB11248.1"/>
    <property type="status" value="ALT_SEQ"/>
    <property type="molecule type" value="Genomic_DNA"/>
</dbReference>
<dbReference type="EMBL" id="CP002688">
    <property type="protein sequence ID" value="AED96126.1"/>
    <property type="molecule type" value="Genomic_DNA"/>
</dbReference>
<dbReference type="EMBL" id="AB493789">
    <property type="protein sequence ID" value="BAH30627.1"/>
    <property type="molecule type" value="mRNA"/>
</dbReference>
<dbReference type="RefSeq" id="NP_199992.2">
    <property type="nucleotide sequence ID" value="NM_124558.3"/>
</dbReference>
<dbReference type="SMR" id="Q9FLI0"/>
<dbReference type="BioGRID" id="20498">
    <property type="interactions" value="9"/>
</dbReference>
<dbReference type="FunCoup" id="Q9FLI0">
    <property type="interactions" value="100"/>
</dbReference>
<dbReference type="IntAct" id="Q9FLI0">
    <property type="interactions" value="9"/>
</dbReference>
<dbReference type="STRING" id="3702.Q9FLI0"/>
<dbReference type="PaxDb" id="3702-AT5G51790.1"/>
<dbReference type="EnsemblPlants" id="AT5G51790.1">
    <property type="protein sequence ID" value="AT5G51790.1"/>
    <property type="gene ID" value="AT5G51790"/>
</dbReference>
<dbReference type="GeneID" id="835253"/>
<dbReference type="Gramene" id="AT5G51790.1">
    <property type="protein sequence ID" value="AT5G51790.1"/>
    <property type="gene ID" value="AT5G51790"/>
</dbReference>
<dbReference type="KEGG" id="ath:AT5G51790"/>
<dbReference type="Araport" id="AT5G51790"/>
<dbReference type="TAIR" id="AT5G51790"/>
<dbReference type="eggNOG" id="ENOG502S1BU">
    <property type="taxonomic scope" value="Eukaryota"/>
</dbReference>
<dbReference type="HOGENOM" id="CLU_094733_1_1_1"/>
<dbReference type="InParanoid" id="Q9FLI0"/>
<dbReference type="OMA" id="CATTQVN"/>
<dbReference type="OrthoDB" id="1935281at2759"/>
<dbReference type="PhylomeDB" id="Q9FLI0"/>
<dbReference type="PRO" id="PR:Q9FLI0"/>
<dbReference type="Proteomes" id="UP000006548">
    <property type="component" value="Chromosome 5"/>
</dbReference>
<dbReference type="ExpressionAtlas" id="Q9FLI0">
    <property type="expression patterns" value="baseline and differential"/>
</dbReference>
<dbReference type="GO" id="GO:0005634">
    <property type="term" value="C:nucleus"/>
    <property type="evidence" value="ECO:0007669"/>
    <property type="project" value="UniProtKB-SubCell"/>
</dbReference>
<dbReference type="GO" id="GO:0003677">
    <property type="term" value="F:DNA binding"/>
    <property type="evidence" value="ECO:0007669"/>
    <property type="project" value="UniProtKB-KW"/>
</dbReference>
<dbReference type="GO" id="GO:0003700">
    <property type="term" value="F:DNA-binding transcription factor activity"/>
    <property type="evidence" value="ECO:0000250"/>
    <property type="project" value="TAIR"/>
</dbReference>
<dbReference type="GO" id="GO:0046983">
    <property type="term" value="F:protein dimerization activity"/>
    <property type="evidence" value="ECO:0007669"/>
    <property type="project" value="InterPro"/>
</dbReference>
<dbReference type="GO" id="GO:0006355">
    <property type="term" value="P:regulation of DNA-templated transcription"/>
    <property type="evidence" value="ECO:0000304"/>
    <property type="project" value="TAIR"/>
</dbReference>
<dbReference type="GO" id="GO:0006357">
    <property type="term" value="P:regulation of transcription by RNA polymerase II"/>
    <property type="evidence" value="ECO:0007669"/>
    <property type="project" value="InterPro"/>
</dbReference>
<dbReference type="CDD" id="cd18914">
    <property type="entry name" value="bHLH_AtORG2_like"/>
    <property type="match status" value="1"/>
</dbReference>
<dbReference type="Gene3D" id="4.10.280.10">
    <property type="entry name" value="Helix-loop-helix DNA-binding domain"/>
    <property type="match status" value="1"/>
</dbReference>
<dbReference type="InterPro" id="IPR011598">
    <property type="entry name" value="bHLH_dom"/>
</dbReference>
<dbReference type="InterPro" id="IPR036638">
    <property type="entry name" value="HLH_DNA-bd_sf"/>
</dbReference>
<dbReference type="InterPro" id="IPR015660">
    <property type="entry name" value="MASH1/Ascl1a-like"/>
</dbReference>
<dbReference type="PANTHER" id="PTHR13935:SF106">
    <property type="entry name" value="ACHAETE-SCUTE COMPLEX PROTEIN T5-RELATED"/>
    <property type="match status" value="1"/>
</dbReference>
<dbReference type="PANTHER" id="PTHR13935">
    <property type="entry name" value="ACHAETE-SCUTE TRANSCRIPTION FACTOR-RELATED"/>
    <property type="match status" value="1"/>
</dbReference>
<dbReference type="Pfam" id="PF00010">
    <property type="entry name" value="HLH"/>
    <property type="match status" value="1"/>
</dbReference>
<dbReference type="SUPFAM" id="SSF47459">
    <property type="entry name" value="HLH, helix-loop-helix DNA-binding domain"/>
    <property type="match status" value="1"/>
</dbReference>
<dbReference type="PROSITE" id="PS50888">
    <property type="entry name" value="BHLH"/>
    <property type="match status" value="1"/>
</dbReference>
<feature type="chain" id="PRO_0000358805" description="Transcription factor bHLH120">
    <location>
        <begin position="1"/>
        <end position="204"/>
    </location>
</feature>
<feature type="domain" description="bHLH" evidence="1">
    <location>
        <begin position="26"/>
        <end position="78"/>
    </location>
</feature>
<feature type="region of interest" description="Disordered" evidence="2">
    <location>
        <begin position="1"/>
        <end position="27"/>
    </location>
</feature>
<feature type="region of interest" description="Disordered" evidence="2">
    <location>
        <begin position="93"/>
        <end position="116"/>
    </location>
</feature>
<name>BH120_ARATH</name>
<accession>Q9FLI0</accession>
<accession>C0SVT6</accession>
<sequence length="204" mass="22995">MNPSNNPKKTRHQSHMPQERDETKKEKKLLHRNIERQRRQEMAILFASLRSQLPLKYIKGKRAMSDHVNGAVSFIKDTQTRIKDLSARRDELKREIGDPTSLTGSGSGSGSSRSEPASVMVQPCVSGFEVVVSSLASGLEAWPLSRVLEVLHGQGLEVISSLTARVNERLMYTIQVEVNSFDCFDLAWLQQKLIEQLVLSTTRH</sequence>
<organism>
    <name type="scientific">Arabidopsis thaliana</name>
    <name type="common">Mouse-ear cress</name>
    <dbReference type="NCBI Taxonomy" id="3702"/>
    <lineage>
        <taxon>Eukaryota</taxon>
        <taxon>Viridiplantae</taxon>
        <taxon>Streptophyta</taxon>
        <taxon>Embryophyta</taxon>
        <taxon>Tracheophyta</taxon>
        <taxon>Spermatophyta</taxon>
        <taxon>Magnoliopsida</taxon>
        <taxon>eudicotyledons</taxon>
        <taxon>Gunneridae</taxon>
        <taxon>Pentapetalae</taxon>
        <taxon>rosids</taxon>
        <taxon>malvids</taxon>
        <taxon>Brassicales</taxon>
        <taxon>Brassicaceae</taxon>
        <taxon>Camelineae</taxon>
        <taxon>Arabidopsis</taxon>
    </lineage>
</organism>
<comment type="subunit">
    <text evidence="3">Homodimer.</text>
</comment>
<comment type="subcellular location">
    <subcellularLocation>
        <location evidence="1">Nucleus</location>
    </subcellularLocation>
</comment>
<comment type="sequence caution" evidence="3">
    <conflict type="erroneous gene model prediction">
        <sequence resource="EMBL-CDS" id="BAB11248"/>
    </conflict>
</comment>
<evidence type="ECO:0000255" key="1">
    <source>
        <dbReference type="PROSITE-ProRule" id="PRU00981"/>
    </source>
</evidence>
<evidence type="ECO:0000256" key="2">
    <source>
        <dbReference type="SAM" id="MobiDB-lite"/>
    </source>
</evidence>
<evidence type="ECO:0000305" key="3"/>
<protein>
    <recommendedName>
        <fullName>Transcription factor bHLH120</fullName>
    </recommendedName>
    <alternativeName>
        <fullName>Basic helix-loop-helix protein 120</fullName>
        <shortName>AtbHLH120</shortName>
        <shortName>bHLH 120</shortName>
    </alternativeName>
    <alternativeName>
        <fullName>Transcription factor EN 4</fullName>
    </alternativeName>
    <alternativeName>
        <fullName>bHLH transcription factor bHLH120</fullName>
    </alternativeName>
</protein>
<reference key="1">
    <citation type="journal article" date="1998" name="DNA Res.">
        <title>Structural analysis of Arabidopsis thaliana chromosome 5. IV. Sequence features of the regions of 1,456,315 bp covered by nineteen physically assigned P1 and TAC clones.</title>
        <authorList>
            <person name="Sato S."/>
            <person name="Kaneko T."/>
            <person name="Kotani H."/>
            <person name="Nakamura Y."/>
            <person name="Asamizu E."/>
            <person name="Miyajima N."/>
            <person name="Tabata S."/>
        </authorList>
    </citation>
    <scope>NUCLEOTIDE SEQUENCE [LARGE SCALE GENOMIC DNA]</scope>
    <source>
        <strain>cv. Columbia</strain>
    </source>
</reference>
<reference key="2">
    <citation type="journal article" date="2017" name="Plant J.">
        <title>Araport11: a complete reannotation of the Arabidopsis thaliana reference genome.</title>
        <authorList>
            <person name="Cheng C.Y."/>
            <person name="Krishnakumar V."/>
            <person name="Chan A.P."/>
            <person name="Thibaud-Nissen F."/>
            <person name="Schobel S."/>
            <person name="Town C.D."/>
        </authorList>
    </citation>
    <scope>GENOME REANNOTATION</scope>
    <source>
        <strain>cv. Columbia</strain>
    </source>
</reference>
<reference key="3">
    <citation type="submission" date="2009-03" db="EMBL/GenBank/DDBJ databases">
        <title>ORF cloning and analysis of Arabidopsis transcription factor genes.</title>
        <authorList>
            <person name="Fujita M."/>
            <person name="Mizukado S."/>
            <person name="Seki M."/>
            <person name="Shinozaki K."/>
            <person name="Mitsuda N."/>
            <person name="Takiguchi Y."/>
            <person name="Takagi M."/>
        </authorList>
    </citation>
    <scope>NUCLEOTIDE SEQUENCE [LARGE SCALE MRNA]</scope>
</reference>
<reference key="4">
    <citation type="journal article" date="2003" name="Mol. Biol. Evol.">
        <title>The basic helix-loop-helix transcription factor family in plants: a genome-wide study of protein structure and functional diversity.</title>
        <authorList>
            <person name="Heim M.A."/>
            <person name="Jakoby M."/>
            <person name="Werber M."/>
            <person name="Martin C."/>
            <person name="Weisshaar B."/>
            <person name="Bailey P.C."/>
        </authorList>
    </citation>
    <scope>GENE FAMILY</scope>
    <scope>NOMENCLATURE</scope>
</reference>
<reference key="5">
    <citation type="journal article" date="2003" name="Plant Cell">
        <title>The Arabidopsis basic/helix-loop-helix transcription factor family.</title>
        <authorList>
            <person name="Toledo-Ortiz G."/>
            <person name="Huq E."/>
            <person name="Quail P.H."/>
        </authorList>
    </citation>
    <scope>GENE FAMILY</scope>
</reference>
<reference key="6">
    <citation type="journal article" date="2003" name="Plant Cell">
        <title>Update on the basic helix-loop-helix transcription factor gene family in Arabidopsis thaliana.</title>
        <authorList>
            <person name="Bailey P.C."/>
            <person name="Martin C."/>
            <person name="Toledo-Ortiz G."/>
            <person name="Quail P.H."/>
            <person name="Huq E."/>
            <person name="Heim M.A."/>
            <person name="Jakoby M."/>
            <person name="Werber M."/>
            <person name="Weisshaar B."/>
        </authorList>
    </citation>
    <scope>GENE FAMILY</scope>
    <scope>NOMENCLATURE</scope>
</reference>
<gene>
    <name type="primary">BHLH120</name>
    <name type="synonym">EN4</name>
    <name type="ordered locus">At5g51790</name>
    <name type="ORF">MIO24.8</name>
</gene>
<keyword id="KW-0238">DNA-binding</keyword>
<keyword id="KW-0539">Nucleus</keyword>
<keyword id="KW-1185">Reference proteome</keyword>
<keyword id="KW-0804">Transcription</keyword>
<keyword id="KW-0805">Transcription regulation</keyword>